<protein>
    <recommendedName>
        <fullName>U8-lycotoxin-Ls1j</fullName>
    </recommendedName>
    <alternativeName>
        <fullName>Toxin-like structure LSTX-H19</fullName>
    </alternativeName>
</protein>
<name>TX819_LYCSI</name>
<dbReference type="EMBL" id="EU926074">
    <property type="protein sequence ID" value="ACI41406.1"/>
    <property type="molecule type" value="mRNA"/>
</dbReference>
<dbReference type="EMBL" id="FM864078">
    <property type="protein sequence ID" value="CAS03675.1"/>
    <property type="molecule type" value="mRNA"/>
</dbReference>
<dbReference type="SMR" id="B6DCZ0"/>
<dbReference type="ArachnoServer" id="AS001013">
    <property type="toxin name" value="U8-lycotoxin-Ls1j"/>
</dbReference>
<dbReference type="GO" id="GO:0005576">
    <property type="term" value="C:extracellular region"/>
    <property type="evidence" value="ECO:0007669"/>
    <property type="project" value="UniProtKB-SubCell"/>
</dbReference>
<dbReference type="GO" id="GO:0090729">
    <property type="term" value="F:toxin activity"/>
    <property type="evidence" value="ECO:0007669"/>
    <property type="project" value="UniProtKB-KW"/>
</dbReference>
<dbReference type="InterPro" id="IPR019553">
    <property type="entry name" value="Spider_toxin_CSTX_knottin"/>
</dbReference>
<dbReference type="Pfam" id="PF10530">
    <property type="entry name" value="Toxin_35"/>
    <property type="match status" value="1"/>
</dbReference>
<proteinExistence type="evidence at transcript level"/>
<sequence>MKLIIFTGLILFAIVSLIEAQANNEKACLPQYQVCTDAPGNCCSNLVCDCYGRYKSGARIGRNCFCLLKGVIYKREN</sequence>
<accession>B6DCZ0</accession>
<comment type="subcellular location">
    <subcellularLocation>
        <location evidence="1">Secreted</location>
    </subcellularLocation>
</comment>
<comment type="tissue specificity">
    <text>Expressed by the venom gland.</text>
</comment>
<comment type="PTM">
    <text evidence="1">Contains 4 disulfide bonds.</text>
</comment>
<comment type="similarity">
    <text evidence="3">Belongs to the neurotoxin 19 (CSTX) family. 08 (U8-Lctx) subfamily.</text>
</comment>
<organism>
    <name type="scientific">Lycosa singoriensis</name>
    <name type="common">Wolf spider</name>
    <name type="synonym">Aranea singoriensis</name>
    <dbReference type="NCBI Taxonomy" id="434756"/>
    <lineage>
        <taxon>Eukaryota</taxon>
        <taxon>Metazoa</taxon>
        <taxon>Ecdysozoa</taxon>
        <taxon>Arthropoda</taxon>
        <taxon>Chelicerata</taxon>
        <taxon>Arachnida</taxon>
        <taxon>Araneae</taxon>
        <taxon>Araneomorphae</taxon>
        <taxon>Entelegynae</taxon>
        <taxon>Lycosoidea</taxon>
        <taxon>Lycosidae</taxon>
        <taxon>Lycosa</taxon>
    </lineage>
</organism>
<feature type="signal peptide" evidence="2">
    <location>
        <begin position="1"/>
        <end position="20"/>
    </location>
</feature>
<feature type="propeptide" id="PRO_0000401799" evidence="1">
    <location>
        <begin position="21"/>
        <end position="26"/>
    </location>
</feature>
<feature type="chain" id="PRO_0000401800" description="U8-lycotoxin-Ls1j">
    <location>
        <begin position="27"/>
        <end position="77"/>
    </location>
</feature>
<keyword id="KW-1015">Disulfide bond</keyword>
<keyword id="KW-0964">Secreted</keyword>
<keyword id="KW-0732">Signal</keyword>
<keyword id="KW-0800">Toxin</keyword>
<evidence type="ECO:0000250" key="1"/>
<evidence type="ECO:0000255" key="2"/>
<evidence type="ECO:0000305" key="3"/>
<reference key="1">
    <citation type="journal article" date="2010" name="Zoology">
        <title>Transcriptome analysis of the venom glands of the Chinese wolf spider Lycosa singoriensis.</title>
        <authorList>
            <person name="Zhang Y."/>
            <person name="Chen J."/>
            <person name="Tang X."/>
            <person name="Wang F."/>
            <person name="Jiang L."/>
            <person name="Xiong X."/>
            <person name="Wang M."/>
            <person name="Rong M."/>
            <person name="Liu Z."/>
            <person name="Liang S."/>
        </authorList>
    </citation>
    <scope>NUCLEOTIDE SEQUENCE [LARGE SCALE MRNA]</scope>
    <source>
        <tissue>Venom gland</tissue>
    </source>
</reference>